<keyword id="KW-0027">Amidation</keyword>
<keyword id="KW-0878">Amphibian defense peptide</keyword>
<keyword id="KW-0044">Antibiotic</keyword>
<keyword id="KW-0929">Antimicrobial</keyword>
<keyword id="KW-0165">Cleavage on pair of basic residues</keyword>
<keyword id="KW-0204">Cytolysis</keyword>
<keyword id="KW-0295">Fungicide</keyword>
<keyword id="KW-0354">Hemolysis</keyword>
<keyword id="KW-0964">Secreted</keyword>
<keyword id="KW-0732">Signal</keyword>
<organism evidence="3">
    <name type="scientific">Sylvirana spinulosa</name>
    <name type="common">Fine-spined frog</name>
    <name type="synonym">Hylarana spinulosa</name>
    <dbReference type="NCBI Taxonomy" id="369515"/>
    <lineage>
        <taxon>Eukaryota</taxon>
        <taxon>Metazoa</taxon>
        <taxon>Chordata</taxon>
        <taxon>Craniata</taxon>
        <taxon>Vertebrata</taxon>
        <taxon>Euteleostomi</taxon>
        <taxon>Amphibia</taxon>
        <taxon>Batrachia</taxon>
        <taxon>Anura</taxon>
        <taxon>Neobatrachia</taxon>
        <taxon>Ranoidea</taxon>
        <taxon>Ranidae</taxon>
        <taxon>Sylvirana</taxon>
    </lineage>
</organism>
<feature type="signal peptide" evidence="1">
    <location>
        <begin position="1"/>
        <end position="22"/>
    </location>
</feature>
<feature type="propeptide" id="PRO_0000439790" description="Removed in mature form" evidence="5">
    <location>
        <begin position="23"/>
        <end position="44"/>
    </location>
</feature>
<feature type="peptide" id="PRO_0000439791" description="Temporin-SN3" evidence="3">
    <location>
        <begin position="47"/>
        <end position="61"/>
    </location>
</feature>
<feature type="modified residue" description="Lysine amide" evidence="2">
    <location>
        <position position="61"/>
    </location>
</feature>
<accession>E7EKJ7</accession>
<protein>
    <recommendedName>
        <fullName evidence="3">Temporin-SN3</fullName>
    </recommendedName>
</protein>
<name>TP3_SYLSP</name>
<comment type="function">
    <text evidence="2">Antimicrobial peptide. Active against some Gram-positive and Gram-negative bacterial strains. Active against fungus C.glabrata 090902 but not against C.albicans ATCC 12231. Shows weak hemolytic activity against human erythrocytes.</text>
</comment>
<comment type="subcellular location">
    <subcellularLocation>
        <location evidence="5">Secreted</location>
    </subcellularLocation>
</comment>
<comment type="tissue specificity">
    <text evidence="5">Expressed by the skin glands.</text>
</comment>
<comment type="similarity">
    <text evidence="4">Belongs to the frog skin active peptide (FSAP) family. Temporin subfamily.</text>
</comment>
<evidence type="ECO:0000255" key="1"/>
<evidence type="ECO:0000269" key="2">
    <source>
    </source>
</evidence>
<evidence type="ECO:0000303" key="3">
    <source>
    </source>
</evidence>
<evidence type="ECO:0000305" key="4"/>
<evidence type="ECO:0000305" key="5">
    <source>
    </source>
</evidence>
<evidence type="ECO:0000312" key="6">
    <source>
        <dbReference type="EMBL" id="ADV36197.1"/>
    </source>
</evidence>
<sequence length="61" mass="6963">MFTLKKTLLLLFFLGTINLSLCEEERNAEEERRDGDDEMDVEVKKRFISGLIGGLMKALGK</sequence>
<proteinExistence type="evidence at protein level"/>
<dbReference type="EMBL" id="HQ735174">
    <property type="protein sequence ID" value="ADV36197.1"/>
    <property type="molecule type" value="mRNA"/>
</dbReference>
<dbReference type="GO" id="GO:0005576">
    <property type="term" value="C:extracellular region"/>
    <property type="evidence" value="ECO:0007669"/>
    <property type="project" value="UniProtKB-SubCell"/>
</dbReference>
<dbReference type="GO" id="GO:0050832">
    <property type="term" value="P:defense response to fungus"/>
    <property type="evidence" value="ECO:0000314"/>
    <property type="project" value="UniProtKB"/>
</dbReference>
<dbReference type="GO" id="GO:0050829">
    <property type="term" value="P:defense response to Gram-negative bacterium"/>
    <property type="evidence" value="ECO:0000314"/>
    <property type="project" value="UniProtKB"/>
</dbReference>
<dbReference type="GO" id="GO:0050830">
    <property type="term" value="P:defense response to Gram-positive bacterium"/>
    <property type="evidence" value="ECO:0000314"/>
    <property type="project" value="UniProtKB"/>
</dbReference>
<dbReference type="GO" id="GO:0031640">
    <property type="term" value="P:killing of cells of another organism"/>
    <property type="evidence" value="ECO:0007669"/>
    <property type="project" value="UniProtKB-KW"/>
</dbReference>
<dbReference type="InterPro" id="IPR004275">
    <property type="entry name" value="Frog_antimicrobial_propeptide"/>
</dbReference>
<dbReference type="Pfam" id="PF03032">
    <property type="entry name" value="FSAP_sig_propep"/>
    <property type="match status" value="1"/>
</dbReference>
<reference evidence="6" key="1">
    <citation type="journal article" date="2013" name="Biochimie">
        <title>Identification of multiple antimicrobial peptides from the skin of fine-spined frog, Hylarana spinulosa (Ranidae).</title>
        <authorList>
            <person name="Yang X."/>
            <person name="Hu Y."/>
            <person name="Xu S."/>
            <person name="Hu Y."/>
            <person name="Meng H."/>
            <person name="Guo C."/>
            <person name="Liu Y."/>
            <person name="Liu J."/>
            <person name="Yu Z."/>
            <person name="Wang H."/>
        </authorList>
    </citation>
    <scope>NUCLEOTIDE SEQUENCE [MRNA]</scope>
    <scope>FUNCTION</scope>
    <scope>SYNTHESIS</scope>
    <scope>IDENTIFICATION BY MASS SPECTROMETRY</scope>
    <scope>AMIDATION AT LYS-61</scope>
    <source>
        <tissue evidence="3">Skin</tissue>
    </source>
</reference>